<accession>P34462</accession>
<evidence type="ECO:0000250" key="1">
    <source>
        <dbReference type="UniProtKB" id="P39942"/>
    </source>
</evidence>
<evidence type="ECO:0000256" key="2">
    <source>
        <dbReference type="SAM" id="MobiDB-lite"/>
    </source>
</evidence>
<evidence type="ECO:0000305" key="3"/>
<evidence type="ECO:0000312" key="4">
    <source>
        <dbReference type="WormBase" id="F55H2.2"/>
    </source>
</evidence>
<reference key="1">
    <citation type="journal article" date="1994" name="Nature">
        <title>2.2 Mb of contiguous nucleotide sequence from chromosome III of C. elegans.</title>
        <authorList>
            <person name="Wilson R."/>
            <person name="Ainscough R."/>
            <person name="Anderson K."/>
            <person name="Baynes C."/>
            <person name="Berks M."/>
            <person name="Bonfield J."/>
            <person name="Burton J."/>
            <person name="Connell M."/>
            <person name="Copsey T."/>
            <person name="Cooper J."/>
            <person name="Coulson A."/>
            <person name="Craxton M."/>
            <person name="Dear S."/>
            <person name="Du Z."/>
            <person name="Durbin R."/>
            <person name="Favello A."/>
            <person name="Fraser A."/>
            <person name="Fulton L."/>
            <person name="Gardner A."/>
            <person name="Green P."/>
            <person name="Hawkins T."/>
            <person name="Hillier L."/>
            <person name="Jier M."/>
            <person name="Johnston L."/>
            <person name="Jones M."/>
            <person name="Kershaw J."/>
            <person name="Kirsten J."/>
            <person name="Laisster N."/>
            <person name="Latreille P."/>
            <person name="Lightning J."/>
            <person name="Lloyd C."/>
            <person name="Mortimore B."/>
            <person name="O'Callaghan M."/>
            <person name="Parsons J."/>
            <person name="Percy C."/>
            <person name="Rifken L."/>
            <person name="Roopra A."/>
            <person name="Saunders D."/>
            <person name="Shownkeen R."/>
            <person name="Sims M."/>
            <person name="Smaldon N."/>
            <person name="Smith A."/>
            <person name="Smith M."/>
            <person name="Sonnhammer E."/>
            <person name="Staden R."/>
            <person name="Sulston J."/>
            <person name="Thierry-Mieg J."/>
            <person name="Thomas K."/>
            <person name="Vaudin M."/>
            <person name="Vaughan K."/>
            <person name="Waterston R."/>
            <person name="Watson A."/>
            <person name="Weinstock L."/>
            <person name="Wilkinson-Sproat J."/>
            <person name="Wohldman P."/>
        </authorList>
    </citation>
    <scope>NUCLEOTIDE SEQUENCE [LARGE SCALE GENOMIC DNA]</scope>
    <source>
        <strain>Bristol N2</strain>
    </source>
</reference>
<reference key="2">
    <citation type="journal article" date="1998" name="Science">
        <title>Genome sequence of the nematode C. elegans: a platform for investigating biology.</title>
        <authorList>
            <consortium name="The C. elegans sequencing consortium"/>
        </authorList>
    </citation>
    <scope>NUCLEOTIDE SEQUENCE [LARGE SCALE GENOMIC DNA]</scope>
    <source>
        <strain>Bristol N2</strain>
    </source>
</reference>
<protein>
    <recommendedName>
        <fullName>V-type proton ATPase subunit D</fullName>
        <shortName>V-ATPase subunit D</shortName>
    </recommendedName>
    <alternativeName>
        <fullName>Vacuolar proton pump subunit D</fullName>
    </alternativeName>
</protein>
<feature type="chain" id="PRO_0000144235" description="V-type proton ATPase subunit D">
    <location>
        <begin position="1"/>
        <end position="257"/>
    </location>
</feature>
<feature type="region of interest" description="Disordered" evidence="2">
    <location>
        <begin position="215"/>
        <end position="257"/>
    </location>
</feature>
<gene>
    <name evidence="4" type="primary">vha-14</name>
    <name evidence="4" type="ORF">F55H2.2</name>
</gene>
<organism>
    <name type="scientific">Caenorhabditis elegans</name>
    <dbReference type="NCBI Taxonomy" id="6239"/>
    <lineage>
        <taxon>Eukaryota</taxon>
        <taxon>Metazoa</taxon>
        <taxon>Ecdysozoa</taxon>
        <taxon>Nematoda</taxon>
        <taxon>Chromadorea</taxon>
        <taxon>Rhabditida</taxon>
        <taxon>Rhabditina</taxon>
        <taxon>Rhabditomorpha</taxon>
        <taxon>Rhabditoidea</taxon>
        <taxon>Rhabditidae</taxon>
        <taxon>Peloderinae</taxon>
        <taxon>Caenorhabditis</taxon>
    </lineage>
</organism>
<dbReference type="EMBL" id="BX284603">
    <property type="protein sequence ID" value="CAA81600.1"/>
    <property type="molecule type" value="Genomic_DNA"/>
</dbReference>
<dbReference type="PIR" id="S40985">
    <property type="entry name" value="S40985"/>
</dbReference>
<dbReference type="RefSeq" id="NP_499094.1">
    <property type="nucleotide sequence ID" value="NM_066693.7"/>
</dbReference>
<dbReference type="SMR" id="P34462"/>
<dbReference type="BioGRID" id="41535">
    <property type="interactions" value="20"/>
</dbReference>
<dbReference type="FunCoup" id="P34462">
    <property type="interactions" value="2333"/>
</dbReference>
<dbReference type="STRING" id="6239.F55H2.2.3"/>
<dbReference type="TCDB" id="3.A.2.2.7">
    <property type="family name" value="the h+- or na+-translocating f-type, v-type and a-type atpase (f-atpase) superfamily"/>
</dbReference>
<dbReference type="iPTMnet" id="P34462"/>
<dbReference type="PaxDb" id="6239-F55H2.2.2"/>
<dbReference type="PeptideAtlas" id="P34462"/>
<dbReference type="EnsemblMetazoa" id="F55H2.2.1">
    <property type="protein sequence ID" value="F55H2.2.1"/>
    <property type="gene ID" value="WBGene00010130"/>
</dbReference>
<dbReference type="GeneID" id="176338"/>
<dbReference type="KEGG" id="cel:CELE_F55H2.2"/>
<dbReference type="UCSC" id="F55H2.2.1">
    <property type="organism name" value="c. elegans"/>
</dbReference>
<dbReference type="AGR" id="WB:WBGene00010130"/>
<dbReference type="CTD" id="176338"/>
<dbReference type="WormBase" id="F55H2.2">
    <property type="protein sequence ID" value="CE00209"/>
    <property type="gene ID" value="WBGene00010130"/>
    <property type="gene designation" value="vha-14"/>
</dbReference>
<dbReference type="eggNOG" id="KOG1647">
    <property type="taxonomic scope" value="Eukaryota"/>
</dbReference>
<dbReference type="GeneTree" id="ENSGT00390000010770"/>
<dbReference type="HOGENOM" id="CLU_069688_0_0_1"/>
<dbReference type="InParanoid" id="P34462"/>
<dbReference type="OMA" id="REEFFRM"/>
<dbReference type="OrthoDB" id="7676488at2759"/>
<dbReference type="PhylomeDB" id="P34462"/>
<dbReference type="Reactome" id="R-CEL-1222556">
    <property type="pathway name" value="ROS and RNS production in phagocytes"/>
</dbReference>
<dbReference type="Reactome" id="R-CEL-6798695">
    <property type="pathway name" value="Neutrophil degranulation"/>
</dbReference>
<dbReference type="Reactome" id="R-CEL-77387">
    <property type="pathway name" value="Insulin receptor recycling"/>
</dbReference>
<dbReference type="Reactome" id="R-CEL-917977">
    <property type="pathway name" value="Transferrin endocytosis and recycling"/>
</dbReference>
<dbReference type="Reactome" id="R-CEL-9639288">
    <property type="pathway name" value="Amino acids regulate mTORC1"/>
</dbReference>
<dbReference type="Reactome" id="R-CEL-983712">
    <property type="pathway name" value="Ion channel transport"/>
</dbReference>
<dbReference type="PRO" id="PR:P34462"/>
<dbReference type="Proteomes" id="UP000001940">
    <property type="component" value="Chromosome III"/>
</dbReference>
<dbReference type="Bgee" id="WBGene00010130">
    <property type="expression patterns" value="Expressed in larva and 4 other cell types or tissues"/>
</dbReference>
<dbReference type="GO" id="GO:0033176">
    <property type="term" value="C:proton-transporting V-type ATPase complex"/>
    <property type="evidence" value="ECO:0000250"/>
    <property type="project" value="WormBase"/>
</dbReference>
<dbReference type="GO" id="GO:0046961">
    <property type="term" value="F:proton-transporting ATPase activity, rotational mechanism"/>
    <property type="evidence" value="ECO:0007669"/>
    <property type="project" value="InterPro"/>
</dbReference>
<dbReference type="GO" id="GO:0051453">
    <property type="term" value="P:regulation of intracellular pH"/>
    <property type="evidence" value="ECO:0000305"/>
    <property type="project" value="WormBase"/>
</dbReference>
<dbReference type="FunFam" id="1.10.287.3240:FF:000011">
    <property type="entry name" value="V-type proton ATPase subunit D"/>
    <property type="match status" value="1"/>
</dbReference>
<dbReference type="Gene3D" id="1.10.287.3240">
    <property type="match status" value="1"/>
</dbReference>
<dbReference type="InterPro" id="IPR002699">
    <property type="entry name" value="V_ATPase_D"/>
</dbReference>
<dbReference type="NCBIfam" id="TIGR00309">
    <property type="entry name" value="V_ATPase_subD"/>
    <property type="match status" value="1"/>
</dbReference>
<dbReference type="PANTHER" id="PTHR11671">
    <property type="entry name" value="V-TYPE ATP SYNTHASE SUBUNIT D"/>
    <property type="match status" value="1"/>
</dbReference>
<dbReference type="Pfam" id="PF01813">
    <property type="entry name" value="ATP-synt_D"/>
    <property type="match status" value="1"/>
</dbReference>
<proteinExistence type="inferred from homology"/>
<name>VATD_CAEEL</name>
<comment type="function">
    <text evidence="1">Subunit of the V1 complex of vacuolar(H+)-ATPase (V-ATPase), a multisubunit enzyme composed of a peripheral complex (V1) that hydrolyzes ATP and a membrane integral complex (V0) that translocates protons (By similarity). V-ATPase is responsible for acidifying and maintaining the pH of intracellular compartments and in some cell types, is targeted to the plasma membrane, where it is responsible for acidifying the extracellular environment (By similarity).</text>
</comment>
<comment type="subunit">
    <text evidence="1">V-ATPase is a heteromultimeric enzyme made up of two complexes: the ATP-hydrolytic V1 complex and the proton translocation V0 complex (By similarity). The V1 complex consists of three catalytic AB heterodimers that form a heterohexamer, three peripheral stalks each consisting of EG heterodimers, one central rotor including subunits D and F, and the regulatory subunits C and H (By similarity). The proton translocation complex V0 consists of the proton transport subunit a, a ring of proteolipid subunits c9c'', rotary subunit d, subunits e and f, and the accessory subunits vah-19/Ac45 and vah-20/PRR (By similarity).</text>
</comment>
<comment type="similarity">
    <text evidence="3">Belongs to the V-ATPase D subunit family.</text>
</comment>
<keyword id="KW-0375">Hydrogen ion transport</keyword>
<keyword id="KW-0406">Ion transport</keyword>
<keyword id="KW-1185">Reference proteome</keyword>
<keyword id="KW-0813">Transport</keyword>
<sequence length="257" mass="28786">MSGGGKDRIAVFPSRMAQTLMKTRLKGAQKGHSLLKKKADALNLRFRDILRKIVENKVLMGEVMKEAAFSLAEAKFTAGDFSHTVIQNVSQAQYRVRMKKENVVGVFLPVFDAYQDGPDAYDLTGLGKGGANIARLKKNYNKAIELLVELATLQTCFITLDEAIKVTNRRVNAIEHVIIPRIENTLTYIVTELDEMEREEFFRMKKIQANKKKLKEQEAAQKALEGPGPGEDAAHSENNPPRNLLASEEDNLPVLFN</sequence>